<proteinExistence type="uncertain"/>
<protein>
    <recommendedName>
        <fullName evidence="4">Putative PDZ domain-containing protein PDZK1P1</fullName>
    </recommendedName>
    <alternativeName>
        <fullName evidence="5">PDZ domain-containing 1 pseudogene 1</fullName>
    </alternativeName>
    <alternativeName>
        <fullName evidence="5">PDZ domain-containing 1 pseudogene 2</fullName>
    </alternativeName>
</protein>
<accession>A8MUH7</accession>
<keyword id="KW-0025">Alternative splicing</keyword>
<keyword id="KW-1185">Reference proteome</keyword>
<keyword id="KW-0677">Repeat</keyword>
<evidence type="ECO:0000255" key="1">
    <source>
        <dbReference type="PROSITE-ProRule" id="PRU00143"/>
    </source>
</evidence>
<evidence type="ECO:0000256" key="2">
    <source>
        <dbReference type="SAM" id="MobiDB-lite"/>
    </source>
</evidence>
<evidence type="ECO:0000303" key="3">
    <source>
    </source>
</evidence>
<evidence type="ECO:0000305" key="4"/>
<evidence type="ECO:0000312" key="5">
    <source>
        <dbReference type="HGNC" id="HGNC:31974"/>
    </source>
</evidence>
<sequence>MNGGVQTWTQPRLCYLVKEGGSHGFSLKTVQGKKGVYMTDITPQGVAMRAGVLADDHLIEVNGENVEDASHEEVVEKVKKSGSRVMFLLVDKETDKRHVEQKIQFKRETASLKLLPHQPRIVEMKKGSNGYGFYLRAGSEQKGWGRVGQIIKDIDSGSPAEEAGLKNNDLVVAVNGESVETLDHDSVVEMIRKGGDQTSLLVVDKETDNMYRLAHFSPFLYYQSQELPNGSVKEAPAPTPTSLEVSSPPDTTEEEDHKPKLCRLAKGENGYGFHLNAIRGLPGSFIKEVQKGGPADLAGLEDEDVIIEVNGVNVLDEPYEKVVDRIQSSGKNVTLLVCGKKAYDYFQAKKIPIVSSLADPLDTPPDSKEGIVVESKHDSHMAKERAHSTASHSSSNSEDTEM</sequence>
<reference key="1">
    <citation type="journal article" date="2004" name="Nat. Genet.">
        <title>Complete sequencing and characterization of 21,243 full-length human cDNAs.</title>
        <authorList>
            <person name="Ota T."/>
            <person name="Suzuki Y."/>
            <person name="Nishikawa T."/>
            <person name="Otsuki T."/>
            <person name="Sugiyama T."/>
            <person name="Irie R."/>
            <person name="Wakamatsu A."/>
            <person name="Hayashi K."/>
            <person name="Sato H."/>
            <person name="Nagai K."/>
            <person name="Kimura K."/>
            <person name="Makita H."/>
            <person name="Sekine M."/>
            <person name="Obayashi M."/>
            <person name="Nishi T."/>
            <person name="Shibahara T."/>
            <person name="Tanaka T."/>
            <person name="Ishii S."/>
            <person name="Yamamoto J."/>
            <person name="Saito K."/>
            <person name="Kawai Y."/>
            <person name="Isono Y."/>
            <person name="Nakamura Y."/>
            <person name="Nagahari K."/>
            <person name="Murakami K."/>
            <person name="Yasuda T."/>
            <person name="Iwayanagi T."/>
            <person name="Wagatsuma M."/>
            <person name="Shiratori A."/>
            <person name="Sudo H."/>
            <person name="Hosoiri T."/>
            <person name="Kaku Y."/>
            <person name="Kodaira H."/>
            <person name="Kondo H."/>
            <person name="Sugawara M."/>
            <person name="Takahashi M."/>
            <person name="Kanda K."/>
            <person name="Yokoi T."/>
            <person name="Furuya T."/>
            <person name="Kikkawa E."/>
            <person name="Omura Y."/>
            <person name="Abe K."/>
            <person name="Kamihara K."/>
            <person name="Katsuta N."/>
            <person name="Sato K."/>
            <person name="Tanikawa M."/>
            <person name="Yamazaki M."/>
            <person name="Ninomiya K."/>
            <person name="Ishibashi T."/>
            <person name="Yamashita H."/>
            <person name="Murakawa K."/>
            <person name="Fujimori K."/>
            <person name="Tanai H."/>
            <person name="Kimata M."/>
            <person name="Watanabe M."/>
            <person name="Hiraoka S."/>
            <person name="Chiba Y."/>
            <person name="Ishida S."/>
            <person name="Ono Y."/>
            <person name="Takiguchi S."/>
            <person name="Watanabe S."/>
            <person name="Yosida M."/>
            <person name="Hotuta T."/>
            <person name="Kusano J."/>
            <person name="Kanehori K."/>
            <person name="Takahashi-Fujii A."/>
            <person name="Hara H."/>
            <person name="Tanase T.-O."/>
            <person name="Nomura Y."/>
            <person name="Togiya S."/>
            <person name="Komai F."/>
            <person name="Hara R."/>
            <person name="Takeuchi K."/>
            <person name="Arita M."/>
            <person name="Imose N."/>
            <person name="Musashino K."/>
            <person name="Yuuki H."/>
            <person name="Oshima A."/>
            <person name="Sasaki N."/>
            <person name="Aotsuka S."/>
            <person name="Yoshikawa Y."/>
            <person name="Matsunawa H."/>
            <person name="Ichihara T."/>
            <person name="Shiohata N."/>
            <person name="Sano S."/>
            <person name="Moriya S."/>
            <person name="Momiyama H."/>
            <person name="Satoh N."/>
            <person name="Takami S."/>
            <person name="Terashima Y."/>
            <person name="Suzuki O."/>
            <person name="Nakagawa S."/>
            <person name="Senoh A."/>
            <person name="Mizoguchi H."/>
            <person name="Goto Y."/>
            <person name="Shimizu F."/>
            <person name="Wakebe H."/>
            <person name="Hishigaki H."/>
            <person name="Watanabe T."/>
            <person name="Sugiyama A."/>
            <person name="Takemoto M."/>
            <person name="Kawakami B."/>
            <person name="Yamazaki M."/>
            <person name="Watanabe K."/>
            <person name="Kumagai A."/>
            <person name="Itakura S."/>
            <person name="Fukuzumi Y."/>
            <person name="Fujimori Y."/>
            <person name="Komiyama M."/>
            <person name="Tashiro H."/>
            <person name="Tanigami A."/>
            <person name="Fujiwara T."/>
            <person name="Ono T."/>
            <person name="Yamada K."/>
            <person name="Fujii Y."/>
            <person name="Ozaki K."/>
            <person name="Hirao M."/>
            <person name="Ohmori Y."/>
            <person name="Kawabata A."/>
            <person name="Hikiji T."/>
            <person name="Kobatake N."/>
            <person name="Inagaki H."/>
            <person name="Ikema Y."/>
            <person name="Okamoto S."/>
            <person name="Okitani R."/>
            <person name="Kawakami T."/>
            <person name="Noguchi S."/>
            <person name="Itoh T."/>
            <person name="Shigeta K."/>
            <person name="Senba T."/>
            <person name="Matsumura K."/>
            <person name="Nakajima Y."/>
            <person name="Mizuno T."/>
            <person name="Morinaga M."/>
            <person name="Sasaki M."/>
            <person name="Togashi T."/>
            <person name="Oyama M."/>
            <person name="Hata H."/>
            <person name="Watanabe M."/>
            <person name="Komatsu T."/>
            <person name="Mizushima-Sugano J."/>
            <person name="Satoh T."/>
            <person name="Shirai Y."/>
            <person name="Takahashi Y."/>
            <person name="Nakagawa K."/>
            <person name="Okumura K."/>
            <person name="Nagase T."/>
            <person name="Nomura N."/>
            <person name="Kikuchi H."/>
            <person name="Masuho Y."/>
            <person name="Yamashita R."/>
            <person name="Nakai K."/>
            <person name="Yada T."/>
            <person name="Nakamura Y."/>
            <person name="Ohara O."/>
            <person name="Isogai T."/>
            <person name="Sugano S."/>
        </authorList>
    </citation>
    <scope>NUCLEOTIDE SEQUENCE [LARGE SCALE MRNA] (ISOFORM 2)</scope>
    <source>
        <tissue>Testis</tissue>
    </source>
</reference>
<reference key="2">
    <citation type="journal article" date="2006" name="Nature">
        <title>The DNA sequence and biological annotation of human chromosome 1.</title>
        <authorList>
            <person name="Gregory S.G."/>
            <person name="Barlow K.F."/>
            <person name="McLay K.E."/>
            <person name="Kaul R."/>
            <person name="Swarbreck D."/>
            <person name="Dunham A."/>
            <person name="Scott C.E."/>
            <person name="Howe K.L."/>
            <person name="Woodfine K."/>
            <person name="Spencer C.C.A."/>
            <person name="Jones M.C."/>
            <person name="Gillson C."/>
            <person name="Searle S."/>
            <person name="Zhou Y."/>
            <person name="Kokocinski F."/>
            <person name="McDonald L."/>
            <person name="Evans R."/>
            <person name="Phillips K."/>
            <person name="Atkinson A."/>
            <person name="Cooper R."/>
            <person name="Jones C."/>
            <person name="Hall R.E."/>
            <person name="Andrews T.D."/>
            <person name="Lloyd C."/>
            <person name="Ainscough R."/>
            <person name="Almeida J.P."/>
            <person name="Ambrose K.D."/>
            <person name="Anderson F."/>
            <person name="Andrew R.W."/>
            <person name="Ashwell R.I.S."/>
            <person name="Aubin K."/>
            <person name="Babbage A.K."/>
            <person name="Bagguley C.L."/>
            <person name="Bailey J."/>
            <person name="Beasley H."/>
            <person name="Bethel G."/>
            <person name="Bird C.P."/>
            <person name="Bray-Allen S."/>
            <person name="Brown J.Y."/>
            <person name="Brown A.J."/>
            <person name="Buckley D."/>
            <person name="Burton J."/>
            <person name="Bye J."/>
            <person name="Carder C."/>
            <person name="Chapman J.C."/>
            <person name="Clark S.Y."/>
            <person name="Clarke G."/>
            <person name="Clee C."/>
            <person name="Cobley V."/>
            <person name="Collier R.E."/>
            <person name="Corby N."/>
            <person name="Coville G.J."/>
            <person name="Davies J."/>
            <person name="Deadman R."/>
            <person name="Dunn M."/>
            <person name="Earthrowl M."/>
            <person name="Ellington A.G."/>
            <person name="Errington H."/>
            <person name="Frankish A."/>
            <person name="Frankland J."/>
            <person name="French L."/>
            <person name="Garner P."/>
            <person name="Garnett J."/>
            <person name="Gay L."/>
            <person name="Ghori M.R.J."/>
            <person name="Gibson R."/>
            <person name="Gilby L.M."/>
            <person name="Gillett W."/>
            <person name="Glithero R.J."/>
            <person name="Grafham D.V."/>
            <person name="Griffiths C."/>
            <person name="Griffiths-Jones S."/>
            <person name="Grocock R."/>
            <person name="Hammond S."/>
            <person name="Harrison E.S.I."/>
            <person name="Hart E."/>
            <person name="Haugen E."/>
            <person name="Heath P.D."/>
            <person name="Holmes S."/>
            <person name="Holt K."/>
            <person name="Howden P.J."/>
            <person name="Hunt A.R."/>
            <person name="Hunt S.E."/>
            <person name="Hunter G."/>
            <person name="Isherwood J."/>
            <person name="James R."/>
            <person name="Johnson C."/>
            <person name="Johnson D."/>
            <person name="Joy A."/>
            <person name="Kay M."/>
            <person name="Kershaw J.K."/>
            <person name="Kibukawa M."/>
            <person name="Kimberley A.M."/>
            <person name="King A."/>
            <person name="Knights A.J."/>
            <person name="Lad H."/>
            <person name="Laird G."/>
            <person name="Lawlor S."/>
            <person name="Leongamornlert D.A."/>
            <person name="Lloyd D.M."/>
            <person name="Loveland J."/>
            <person name="Lovell J."/>
            <person name="Lush M.J."/>
            <person name="Lyne R."/>
            <person name="Martin S."/>
            <person name="Mashreghi-Mohammadi M."/>
            <person name="Matthews L."/>
            <person name="Matthews N.S.W."/>
            <person name="McLaren S."/>
            <person name="Milne S."/>
            <person name="Mistry S."/>
            <person name="Moore M.J.F."/>
            <person name="Nickerson T."/>
            <person name="O'Dell C.N."/>
            <person name="Oliver K."/>
            <person name="Palmeiri A."/>
            <person name="Palmer S.A."/>
            <person name="Parker A."/>
            <person name="Patel D."/>
            <person name="Pearce A.V."/>
            <person name="Peck A.I."/>
            <person name="Pelan S."/>
            <person name="Phelps K."/>
            <person name="Phillimore B.J."/>
            <person name="Plumb R."/>
            <person name="Rajan J."/>
            <person name="Raymond C."/>
            <person name="Rouse G."/>
            <person name="Saenphimmachak C."/>
            <person name="Sehra H.K."/>
            <person name="Sheridan E."/>
            <person name="Shownkeen R."/>
            <person name="Sims S."/>
            <person name="Skuce C.D."/>
            <person name="Smith M."/>
            <person name="Steward C."/>
            <person name="Subramanian S."/>
            <person name="Sycamore N."/>
            <person name="Tracey A."/>
            <person name="Tromans A."/>
            <person name="Van Helmond Z."/>
            <person name="Wall M."/>
            <person name="Wallis J.M."/>
            <person name="White S."/>
            <person name="Whitehead S.L."/>
            <person name="Wilkinson J.E."/>
            <person name="Willey D.L."/>
            <person name="Williams H."/>
            <person name="Wilming L."/>
            <person name="Wray P.W."/>
            <person name="Wu Z."/>
            <person name="Coulson A."/>
            <person name="Vaudin M."/>
            <person name="Sulston J.E."/>
            <person name="Durbin R.M."/>
            <person name="Hubbard T."/>
            <person name="Wooster R."/>
            <person name="Dunham I."/>
            <person name="Carter N.P."/>
            <person name="McVean G."/>
            <person name="Ross M.T."/>
            <person name="Harrow J."/>
            <person name="Olson M.V."/>
            <person name="Beck S."/>
            <person name="Rogers J."/>
            <person name="Bentley D.R."/>
        </authorList>
    </citation>
    <scope>NUCLEOTIDE SEQUENCE [LARGE SCALE GENOMIC DNA]</scope>
</reference>
<dbReference type="EMBL" id="AK126719">
    <property type="status" value="NOT_ANNOTATED_CDS"/>
    <property type="molecule type" value="mRNA"/>
</dbReference>
<dbReference type="EMBL" id="AL356004">
    <property type="status" value="NOT_ANNOTATED_CDS"/>
    <property type="molecule type" value="Genomic_DNA"/>
</dbReference>
<dbReference type="EMBL" id="BX537254">
    <property type="status" value="NOT_ANNOTATED_CDS"/>
    <property type="molecule type" value="Genomic_DNA"/>
</dbReference>
<dbReference type="SMR" id="A8MUH7"/>
<dbReference type="FunCoup" id="A8MUH7">
    <property type="interactions" value="46"/>
</dbReference>
<dbReference type="IntAct" id="A8MUH7">
    <property type="interactions" value="30"/>
</dbReference>
<dbReference type="GlyGen" id="A8MUH7">
    <property type="glycosylation" value="1 site"/>
</dbReference>
<dbReference type="iPTMnet" id="A8MUH7"/>
<dbReference type="PhosphoSitePlus" id="A8MUH7"/>
<dbReference type="BioMuta" id="HGNC:31974"/>
<dbReference type="jPOST" id="A8MUH7"/>
<dbReference type="MassIVE" id="A8MUH7"/>
<dbReference type="PeptideAtlas" id="A8MUH7"/>
<dbReference type="AGR" id="HGNC:31974"/>
<dbReference type="GeneCards" id="PDZK1P1"/>
<dbReference type="HGNC" id="HGNC:31974">
    <property type="gene designation" value="PDZK1P1"/>
</dbReference>
<dbReference type="neXtProt" id="NX_A8MUH7"/>
<dbReference type="InParanoid" id="A8MUH7"/>
<dbReference type="PAN-GO" id="A8MUH7">
    <property type="GO annotations" value="3 GO annotations based on evolutionary models"/>
</dbReference>
<dbReference type="PathwayCommons" id="A8MUH7"/>
<dbReference type="SignaLink" id="A8MUH7"/>
<dbReference type="Pharos" id="A8MUH7">
    <property type="development level" value="Tdark"/>
</dbReference>
<dbReference type="Proteomes" id="UP000005640">
    <property type="component" value="Unplaced"/>
</dbReference>
<dbReference type="RNAct" id="A8MUH7">
    <property type="molecule type" value="protein"/>
</dbReference>
<dbReference type="GO" id="GO:0016324">
    <property type="term" value="C:apical plasma membrane"/>
    <property type="evidence" value="ECO:0000318"/>
    <property type="project" value="GO_Central"/>
</dbReference>
<dbReference type="GO" id="GO:0043495">
    <property type="term" value="F:protein-membrane adaptor activity"/>
    <property type="evidence" value="ECO:0000318"/>
    <property type="project" value="GO_Central"/>
</dbReference>
<dbReference type="GO" id="GO:0005102">
    <property type="term" value="F:signaling receptor binding"/>
    <property type="evidence" value="ECO:0000318"/>
    <property type="project" value="GO_Central"/>
</dbReference>
<dbReference type="GO" id="GO:0072659">
    <property type="term" value="P:protein localization to plasma membrane"/>
    <property type="evidence" value="ECO:0000318"/>
    <property type="project" value="GO_Central"/>
</dbReference>
<dbReference type="CDD" id="cd06768">
    <property type="entry name" value="PDZ_NHERF-like"/>
    <property type="match status" value="3"/>
</dbReference>
<dbReference type="FunFam" id="2.30.42.10:FF:000187">
    <property type="entry name" value="Na(+)/H(+) exchange regulatory cofactor NHE-RF3"/>
    <property type="match status" value="1"/>
</dbReference>
<dbReference type="FunFam" id="2.30.42.10:FF:000211">
    <property type="entry name" value="Na(+)/H(+) exchange regulatory cofactor NHE-RF3"/>
    <property type="match status" value="1"/>
</dbReference>
<dbReference type="FunFam" id="2.30.42.10:FF:000123">
    <property type="entry name" value="Na(+)/H(+) exchange regulatory cofactor NHE-RF4"/>
    <property type="match status" value="1"/>
</dbReference>
<dbReference type="Gene3D" id="2.30.42.10">
    <property type="match status" value="3"/>
</dbReference>
<dbReference type="InterPro" id="IPR051067">
    <property type="entry name" value="NHER"/>
</dbReference>
<dbReference type="InterPro" id="IPR001478">
    <property type="entry name" value="PDZ"/>
</dbReference>
<dbReference type="InterPro" id="IPR036034">
    <property type="entry name" value="PDZ_sf"/>
</dbReference>
<dbReference type="PANTHER" id="PTHR14191:SF6">
    <property type="entry name" value="NA(+)_H(+) EXCHANGE REGULATORY COFACTOR NHE-RF3-RELATED"/>
    <property type="match status" value="1"/>
</dbReference>
<dbReference type="PANTHER" id="PTHR14191">
    <property type="entry name" value="PDZ DOMAIN CONTAINING PROTEIN"/>
    <property type="match status" value="1"/>
</dbReference>
<dbReference type="Pfam" id="PF00595">
    <property type="entry name" value="PDZ"/>
    <property type="match status" value="3"/>
</dbReference>
<dbReference type="SMART" id="SM00228">
    <property type="entry name" value="PDZ"/>
    <property type="match status" value="3"/>
</dbReference>
<dbReference type="SUPFAM" id="SSF50156">
    <property type="entry name" value="PDZ domain-like"/>
    <property type="match status" value="3"/>
</dbReference>
<dbReference type="PROSITE" id="PS50106">
    <property type="entry name" value="PDZ"/>
    <property type="match status" value="3"/>
</dbReference>
<organism>
    <name type="scientific">Homo sapiens</name>
    <name type="common">Human</name>
    <dbReference type="NCBI Taxonomy" id="9606"/>
    <lineage>
        <taxon>Eukaryota</taxon>
        <taxon>Metazoa</taxon>
        <taxon>Chordata</taxon>
        <taxon>Craniata</taxon>
        <taxon>Vertebrata</taxon>
        <taxon>Euteleostomi</taxon>
        <taxon>Mammalia</taxon>
        <taxon>Eutheria</taxon>
        <taxon>Euarchontoglires</taxon>
        <taxon>Primates</taxon>
        <taxon>Haplorrhini</taxon>
        <taxon>Catarrhini</taxon>
        <taxon>Hominidae</taxon>
        <taxon>Homo</taxon>
    </lineage>
</organism>
<feature type="chain" id="PRO_0000344368" description="Putative PDZ domain-containing protein PDZK1P1">
    <location>
        <begin position="1"/>
        <end position="402"/>
    </location>
</feature>
<feature type="domain" description="PDZ 1" evidence="1">
    <location>
        <begin position="12"/>
        <end position="93"/>
    </location>
</feature>
<feature type="domain" description="PDZ 2" evidence="1">
    <location>
        <begin position="121"/>
        <end position="206"/>
    </location>
</feature>
<feature type="domain" description="PDZ 3" evidence="1">
    <location>
        <begin position="261"/>
        <end position="341"/>
    </location>
</feature>
<feature type="region of interest" description="Disordered" evidence="2">
    <location>
        <begin position="230"/>
        <end position="258"/>
    </location>
</feature>
<feature type="region of interest" description="Disordered" evidence="2">
    <location>
        <begin position="362"/>
        <end position="402"/>
    </location>
</feature>
<feature type="compositionally biased region" description="Polar residues" evidence="2">
    <location>
        <begin position="240"/>
        <end position="250"/>
    </location>
</feature>
<feature type="compositionally biased region" description="Basic and acidic residues" evidence="2">
    <location>
        <begin position="365"/>
        <end position="387"/>
    </location>
</feature>
<feature type="compositionally biased region" description="Low complexity" evidence="2">
    <location>
        <begin position="388"/>
        <end position="402"/>
    </location>
</feature>
<feature type="splice variant" id="VSP_034752" description="In isoform 2." evidence="3">
    <location>
        <begin position="143"/>
        <end position="147"/>
    </location>
</feature>
<feature type="splice variant" id="VSP_034753" description="In isoform 2." evidence="3">
    <original>ENGYGF</original>
    <variation>TEGRSC</variation>
    <location>
        <begin position="268"/>
        <end position="273"/>
    </location>
</feature>
<feature type="splice variant" id="VSP_034754" description="In isoform 2." evidence="3">
    <location>
        <begin position="274"/>
        <end position="402"/>
    </location>
</feature>
<name>PDZ1P_HUMAN</name>
<gene>
    <name evidence="5" type="primary">PDZK1P1</name>
    <name evidence="5" type="synonym">PDZK1P2</name>
</gene>
<comment type="alternative products">
    <event type="alternative splicing"/>
    <isoform>
        <id>A8MUH7-1</id>
        <name>1</name>
        <sequence type="displayed"/>
    </isoform>
    <isoform>
        <id>A8MUH7-2</id>
        <name>2</name>
        <sequence type="described" ref="VSP_034752 VSP_034753 VSP_034754"/>
    </isoform>
</comment>
<comment type="similarity">
    <text evidence="4">Belongs to the NHER family.</text>
</comment>
<comment type="caution">
    <text evidence="4">Could be the product of a pseudogene. Putative protein with similarity to PDZK1 C-terminus.</text>
</comment>